<organism>
    <name type="scientific">Homo sapiens</name>
    <name type="common">Human</name>
    <dbReference type="NCBI Taxonomy" id="9606"/>
    <lineage>
        <taxon>Eukaryota</taxon>
        <taxon>Metazoa</taxon>
        <taxon>Chordata</taxon>
        <taxon>Craniata</taxon>
        <taxon>Vertebrata</taxon>
        <taxon>Euteleostomi</taxon>
        <taxon>Mammalia</taxon>
        <taxon>Eutheria</taxon>
        <taxon>Euarchontoglires</taxon>
        <taxon>Primates</taxon>
        <taxon>Haplorrhini</taxon>
        <taxon>Catarrhini</taxon>
        <taxon>Hominidae</taxon>
        <taxon>Homo</taxon>
    </lineage>
</organism>
<keyword id="KW-0479">Metal-binding</keyword>
<keyword id="KW-1267">Proteomics identification</keyword>
<keyword id="KW-1185">Reference proteome</keyword>
<keyword id="KW-0862">Zinc</keyword>
<keyword id="KW-0863">Zinc-finger</keyword>
<comment type="similarity">
    <text>Belongs to the TEX13 family.</text>
</comment>
<proteinExistence type="evidence at protein level"/>
<sequence>MAMNFGDHASGFRHNDVIRFINNEVLMDGSGPAFYVAFRSRPWNEVEDSLQAIVADSQVPRAIKRACTWSALALSVRVATRQREELLHHVRRLQRHAEERQATSWALTSQLQQLRLEHEVAATQLHLAQAALQQALNERDGLYGRLLQIERFPQAAPLAHEIMSGPQAEQNGAAACPLATEQQSDMVAMGTHANAQMPTPTDVLYVPGPLSPWAQGMQPPLPVPHPFPHPPPFPMKFPSLPPLPPAVVTGAEAAAVPLQMPPTEIHPPCPWPAVGFQEEMAPLWYQRSYIQEEDSKILQGSFPLGDSRSHSQGEGSERSQRMPLPGDSGCHNPLSESPQGTAPLGSSGCHSQEEGTEGPQGMDPLGNRERQNQKEGPKRARRMHTLVFRRSHKSEGPEGPQGTVPQGDSRSYSQEGCSDRAQEMATLVFIRRCKPEGPKRPQWTVPLGDSRSHIKEEGPEGPQRIVLQGDNRSYSQEGSPERAQGMATLVFSRSCKPEEGPERPQDTPLGDSRSHIKEEGPEGPQRIVLQGDNRSYSQEGSPERAQGMATLVFSRSCKPEEGPERPQDTPLGDSRSHIKEEGPEGPQRIVLQGDNRSYSQEGSRERAQGMATLVFSRSCKPEEGPERPQGTPLGDSRSHGVRESPKKWQPQRQKAKKPKVNKVSGSQQQEKPASFPVPVNWKCPWCKAINFSWRTACYKCKKACVPFESGGQTQ</sequence>
<reference key="1">
    <citation type="journal article" date="2005" name="Nature">
        <title>The DNA sequence of the human X chromosome.</title>
        <authorList>
            <person name="Ross M.T."/>
            <person name="Grafham D.V."/>
            <person name="Coffey A.J."/>
            <person name="Scherer S."/>
            <person name="McLay K."/>
            <person name="Muzny D."/>
            <person name="Platzer M."/>
            <person name="Howell G.R."/>
            <person name="Burrows C."/>
            <person name="Bird C.P."/>
            <person name="Frankish A."/>
            <person name="Lovell F.L."/>
            <person name="Howe K.L."/>
            <person name="Ashurst J.L."/>
            <person name="Fulton R.S."/>
            <person name="Sudbrak R."/>
            <person name="Wen G."/>
            <person name="Jones M.C."/>
            <person name="Hurles M.E."/>
            <person name="Andrews T.D."/>
            <person name="Scott C.E."/>
            <person name="Searle S."/>
            <person name="Ramser J."/>
            <person name="Whittaker A."/>
            <person name="Deadman R."/>
            <person name="Carter N.P."/>
            <person name="Hunt S.E."/>
            <person name="Chen R."/>
            <person name="Cree A."/>
            <person name="Gunaratne P."/>
            <person name="Havlak P."/>
            <person name="Hodgson A."/>
            <person name="Metzker M.L."/>
            <person name="Richards S."/>
            <person name="Scott G."/>
            <person name="Steffen D."/>
            <person name="Sodergren E."/>
            <person name="Wheeler D.A."/>
            <person name="Worley K.C."/>
            <person name="Ainscough R."/>
            <person name="Ambrose K.D."/>
            <person name="Ansari-Lari M.A."/>
            <person name="Aradhya S."/>
            <person name="Ashwell R.I."/>
            <person name="Babbage A.K."/>
            <person name="Bagguley C.L."/>
            <person name="Ballabio A."/>
            <person name="Banerjee R."/>
            <person name="Barker G.E."/>
            <person name="Barlow K.F."/>
            <person name="Barrett I.P."/>
            <person name="Bates K.N."/>
            <person name="Beare D.M."/>
            <person name="Beasley H."/>
            <person name="Beasley O."/>
            <person name="Beck A."/>
            <person name="Bethel G."/>
            <person name="Blechschmidt K."/>
            <person name="Brady N."/>
            <person name="Bray-Allen S."/>
            <person name="Bridgeman A.M."/>
            <person name="Brown A.J."/>
            <person name="Brown M.J."/>
            <person name="Bonnin D."/>
            <person name="Bruford E.A."/>
            <person name="Buhay C."/>
            <person name="Burch P."/>
            <person name="Burford D."/>
            <person name="Burgess J."/>
            <person name="Burrill W."/>
            <person name="Burton J."/>
            <person name="Bye J.M."/>
            <person name="Carder C."/>
            <person name="Carrel L."/>
            <person name="Chako J."/>
            <person name="Chapman J.C."/>
            <person name="Chavez D."/>
            <person name="Chen E."/>
            <person name="Chen G."/>
            <person name="Chen Y."/>
            <person name="Chen Z."/>
            <person name="Chinault C."/>
            <person name="Ciccodicola A."/>
            <person name="Clark S.Y."/>
            <person name="Clarke G."/>
            <person name="Clee C.M."/>
            <person name="Clegg S."/>
            <person name="Clerc-Blankenburg K."/>
            <person name="Clifford K."/>
            <person name="Cobley V."/>
            <person name="Cole C.G."/>
            <person name="Conquer J.S."/>
            <person name="Corby N."/>
            <person name="Connor R.E."/>
            <person name="David R."/>
            <person name="Davies J."/>
            <person name="Davis C."/>
            <person name="Davis J."/>
            <person name="Delgado O."/>
            <person name="Deshazo D."/>
            <person name="Dhami P."/>
            <person name="Ding Y."/>
            <person name="Dinh H."/>
            <person name="Dodsworth S."/>
            <person name="Draper H."/>
            <person name="Dugan-Rocha S."/>
            <person name="Dunham A."/>
            <person name="Dunn M."/>
            <person name="Durbin K.J."/>
            <person name="Dutta I."/>
            <person name="Eades T."/>
            <person name="Ellwood M."/>
            <person name="Emery-Cohen A."/>
            <person name="Errington H."/>
            <person name="Evans K.L."/>
            <person name="Faulkner L."/>
            <person name="Francis F."/>
            <person name="Frankland J."/>
            <person name="Fraser A.E."/>
            <person name="Galgoczy P."/>
            <person name="Gilbert J."/>
            <person name="Gill R."/>
            <person name="Gloeckner G."/>
            <person name="Gregory S.G."/>
            <person name="Gribble S."/>
            <person name="Griffiths C."/>
            <person name="Grocock R."/>
            <person name="Gu Y."/>
            <person name="Gwilliam R."/>
            <person name="Hamilton C."/>
            <person name="Hart E.A."/>
            <person name="Hawes A."/>
            <person name="Heath P.D."/>
            <person name="Heitmann K."/>
            <person name="Hennig S."/>
            <person name="Hernandez J."/>
            <person name="Hinzmann B."/>
            <person name="Ho S."/>
            <person name="Hoffs M."/>
            <person name="Howden P.J."/>
            <person name="Huckle E.J."/>
            <person name="Hume J."/>
            <person name="Hunt P.J."/>
            <person name="Hunt A.R."/>
            <person name="Isherwood J."/>
            <person name="Jacob L."/>
            <person name="Johnson D."/>
            <person name="Jones S."/>
            <person name="de Jong P.J."/>
            <person name="Joseph S.S."/>
            <person name="Keenan S."/>
            <person name="Kelly S."/>
            <person name="Kershaw J.K."/>
            <person name="Khan Z."/>
            <person name="Kioschis P."/>
            <person name="Klages S."/>
            <person name="Knights A.J."/>
            <person name="Kosiura A."/>
            <person name="Kovar-Smith C."/>
            <person name="Laird G.K."/>
            <person name="Langford C."/>
            <person name="Lawlor S."/>
            <person name="Leversha M."/>
            <person name="Lewis L."/>
            <person name="Liu W."/>
            <person name="Lloyd C."/>
            <person name="Lloyd D.M."/>
            <person name="Loulseged H."/>
            <person name="Loveland J.E."/>
            <person name="Lovell J.D."/>
            <person name="Lozado R."/>
            <person name="Lu J."/>
            <person name="Lyne R."/>
            <person name="Ma J."/>
            <person name="Maheshwari M."/>
            <person name="Matthews L.H."/>
            <person name="McDowall J."/>
            <person name="McLaren S."/>
            <person name="McMurray A."/>
            <person name="Meidl P."/>
            <person name="Meitinger T."/>
            <person name="Milne S."/>
            <person name="Miner G."/>
            <person name="Mistry S.L."/>
            <person name="Morgan M."/>
            <person name="Morris S."/>
            <person name="Mueller I."/>
            <person name="Mullikin J.C."/>
            <person name="Nguyen N."/>
            <person name="Nordsiek G."/>
            <person name="Nyakatura G."/>
            <person name="O'dell C.N."/>
            <person name="Okwuonu G."/>
            <person name="Palmer S."/>
            <person name="Pandian R."/>
            <person name="Parker D."/>
            <person name="Parrish J."/>
            <person name="Pasternak S."/>
            <person name="Patel D."/>
            <person name="Pearce A.V."/>
            <person name="Pearson D.M."/>
            <person name="Pelan S.E."/>
            <person name="Perez L."/>
            <person name="Porter K.M."/>
            <person name="Ramsey Y."/>
            <person name="Reichwald K."/>
            <person name="Rhodes S."/>
            <person name="Ridler K.A."/>
            <person name="Schlessinger D."/>
            <person name="Schueler M.G."/>
            <person name="Sehra H.K."/>
            <person name="Shaw-Smith C."/>
            <person name="Shen H."/>
            <person name="Sheridan E.M."/>
            <person name="Shownkeen R."/>
            <person name="Skuce C.D."/>
            <person name="Smith M.L."/>
            <person name="Sotheran E.C."/>
            <person name="Steingruber H.E."/>
            <person name="Steward C.A."/>
            <person name="Storey R."/>
            <person name="Swann R.M."/>
            <person name="Swarbreck D."/>
            <person name="Tabor P.E."/>
            <person name="Taudien S."/>
            <person name="Taylor T."/>
            <person name="Teague B."/>
            <person name="Thomas K."/>
            <person name="Thorpe A."/>
            <person name="Timms K."/>
            <person name="Tracey A."/>
            <person name="Trevanion S."/>
            <person name="Tromans A.C."/>
            <person name="d'Urso M."/>
            <person name="Verduzco D."/>
            <person name="Villasana D."/>
            <person name="Waldron L."/>
            <person name="Wall M."/>
            <person name="Wang Q."/>
            <person name="Warren J."/>
            <person name="Warry G.L."/>
            <person name="Wei X."/>
            <person name="West A."/>
            <person name="Whitehead S.L."/>
            <person name="Whiteley M.N."/>
            <person name="Wilkinson J.E."/>
            <person name="Willey D.L."/>
            <person name="Williams G."/>
            <person name="Williams L."/>
            <person name="Williamson A."/>
            <person name="Williamson H."/>
            <person name="Wilming L."/>
            <person name="Woodmansey R.L."/>
            <person name="Wray P.W."/>
            <person name="Yen J."/>
            <person name="Zhang J."/>
            <person name="Zhou J."/>
            <person name="Zoghbi H."/>
            <person name="Zorilla S."/>
            <person name="Buck D."/>
            <person name="Reinhardt R."/>
            <person name="Poustka A."/>
            <person name="Rosenthal A."/>
            <person name="Lehrach H."/>
            <person name="Meindl A."/>
            <person name="Minx P.J."/>
            <person name="Hillier L.W."/>
            <person name="Willard H.F."/>
            <person name="Wilson R.K."/>
            <person name="Waterston R.H."/>
            <person name="Rice C.M."/>
            <person name="Vaudin M."/>
            <person name="Coulson A."/>
            <person name="Nelson D.L."/>
            <person name="Weinstock G."/>
            <person name="Sulston J.E."/>
            <person name="Durbin R.M."/>
            <person name="Hubbard T."/>
            <person name="Gibbs R.A."/>
            <person name="Beck S."/>
            <person name="Rogers J."/>
            <person name="Bentley D.R."/>
        </authorList>
    </citation>
    <scope>NUCLEOTIDE SEQUENCE [LARGE SCALE GENOMIC DNA]</scope>
</reference>
<dbReference type="EMBL" id="AL022718">
    <property type="status" value="NOT_ANNOTATED_CDS"/>
    <property type="molecule type" value="Genomic_DNA"/>
</dbReference>
<dbReference type="EMBL" id="AL391241">
    <property type="status" value="NOT_ANNOTATED_CDS"/>
    <property type="molecule type" value="Genomic_DNA"/>
</dbReference>
<dbReference type="CCDS" id="CCDS87773.1"/>
<dbReference type="RefSeq" id="NP_001342463.1">
    <property type="nucleotide sequence ID" value="NM_001355534.2"/>
</dbReference>
<dbReference type="SMR" id="A0A0J9YY54"/>
<dbReference type="IntAct" id="A0A0J9YY54">
    <property type="interactions" value="1"/>
</dbReference>
<dbReference type="MINT" id="A0A0J9YY54"/>
<dbReference type="STRING" id="9606.ENSP00000488696"/>
<dbReference type="GlyGen" id="A0A0J9YY54">
    <property type="glycosylation" value="1 site, 1 O-linked glycan (1 site)"/>
</dbReference>
<dbReference type="BioMuta" id="TEX13D"/>
<dbReference type="MassIVE" id="A0A0J9YY54"/>
<dbReference type="PeptideAtlas" id="A0A0J9YY54"/>
<dbReference type="Ensembl" id="ENST00000632372.3">
    <property type="protein sequence ID" value="ENSP00000488696.1"/>
    <property type="gene ID" value="ENSG00000282419.3"/>
</dbReference>
<dbReference type="GeneID" id="100132015"/>
<dbReference type="MANE-Select" id="ENST00000632372.3">
    <property type="protein sequence ID" value="ENSP00000488696.1"/>
    <property type="RefSeq nucleotide sequence ID" value="NM_001355534.2"/>
    <property type="RefSeq protein sequence ID" value="NP_001342463.1"/>
</dbReference>
<dbReference type="AGR" id="HGNC:52278"/>
<dbReference type="GeneCards" id="TEX13D"/>
<dbReference type="HGNC" id="HGNC:52278">
    <property type="gene designation" value="TEX13D"/>
</dbReference>
<dbReference type="HPA" id="ENSG00000282419">
    <property type="expression patterns" value="Tissue enriched (testis)"/>
</dbReference>
<dbReference type="MIM" id="301124">
    <property type="type" value="gene"/>
</dbReference>
<dbReference type="neXtProt" id="NX_A0A0J9YY54"/>
<dbReference type="VEuPathDB" id="HostDB:ENSG00000282419"/>
<dbReference type="GeneTree" id="ENSGT00940000161768"/>
<dbReference type="InParanoid" id="A0A0J9YY54"/>
<dbReference type="OMA" id="INFSWRT"/>
<dbReference type="OrthoDB" id="9527063at2759"/>
<dbReference type="PAN-GO" id="A0A0J9YY54">
    <property type="GO annotations" value="2 GO annotations based on evolutionary models"/>
</dbReference>
<dbReference type="ChiTaRS" id="TEX13D">
    <property type="organism name" value="human"/>
</dbReference>
<dbReference type="Pharos" id="A0A0J9YY54">
    <property type="development level" value="Tdark"/>
</dbReference>
<dbReference type="PRO" id="PR:A0A0J9YY54"/>
<dbReference type="Proteomes" id="UP000005640">
    <property type="component" value="Chromosome X"/>
</dbReference>
<dbReference type="RNAct" id="A0A0J9YY54">
    <property type="molecule type" value="protein"/>
</dbReference>
<dbReference type="Bgee" id="ENSG00000282419">
    <property type="expression patterns" value="Expressed in male germ line stem cell (sensu Vertebrata) in testis and 14 other cell types or tissues"/>
</dbReference>
<dbReference type="GO" id="GO:0003729">
    <property type="term" value="F:mRNA binding"/>
    <property type="evidence" value="ECO:0000318"/>
    <property type="project" value="GO_Central"/>
</dbReference>
<dbReference type="GO" id="GO:0008270">
    <property type="term" value="F:zinc ion binding"/>
    <property type="evidence" value="ECO:0007669"/>
    <property type="project" value="UniProtKB-KW"/>
</dbReference>
<dbReference type="InterPro" id="IPR028193">
    <property type="entry name" value="TEX13A-D_N"/>
</dbReference>
<dbReference type="InterPro" id="IPR049534">
    <property type="entry name" value="TEX13A/C/D_Znf"/>
</dbReference>
<dbReference type="InterPro" id="IPR049367">
    <property type="entry name" value="TX13C/D_rpt"/>
</dbReference>
<dbReference type="InterPro" id="IPR001876">
    <property type="entry name" value="Znf_RanBP2"/>
</dbReference>
<dbReference type="PANTHER" id="PTHR23111:SF28">
    <property type="entry name" value="TESTIS-EXPRESSED PROTEIN 13D"/>
    <property type="match status" value="1"/>
</dbReference>
<dbReference type="PANTHER" id="PTHR23111">
    <property type="entry name" value="ZINC FINGER PROTEIN"/>
    <property type="match status" value="1"/>
</dbReference>
<dbReference type="Pfam" id="PF15186">
    <property type="entry name" value="TEX13"/>
    <property type="match status" value="1"/>
</dbReference>
<dbReference type="Pfam" id="PF20868">
    <property type="entry name" value="TX13_rpt"/>
    <property type="match status" value="6"/>
</dbReference>
<dbReference type="Pfam" id="PF20864">
    <property type="entry name" value="Zn_ribbon_TEX13"/>
    <property type="match status" value="1"/>
</dbReference>
<dbReference type="PROSITE" id="PS01358">
    <property type="entry name" value="ZF_RANBP2_1"/>
    <property type="match status" value="1"/>
</dbReference>
<evidence type="ECO:0000255" key="1">
    <source>
        <dbReference type="PROSITE-ProRule" id="PRU00322"/>
    </source>
</evidence>
<evidence type="ECO:0000256" key="2">
    <source>
        <dbReference type="SAM" id="MobiDB-lite"/>
    </source>
</evidence>
<evidence type="ECO:0000305" key="3"/>
<evidence type="ECO:0000312" key="4">
    <source>
        <dbReference type="HGNC" id="HGNC:52278"/>
    </source>
</evidence>
<feature type="chain" id="PRO_0000444980" description="Testis-expressed protein 13D">
    <location>
        <begin position="1"/>
        <end position="714"/>
    </location>
</feature>
<feature type="zinc finger region" description="RanBP2-type" evidence="1">
    <location>
        <begin position="677"/>
        <end position="706"/>
    </location>
</feature>
<feature type="region of interest" description="Disordered" evidence="2">
    <location>
        <begin position="300"/>
        <end position="419"/>
    </location>
</feature>
<feature type="region of interest" description="Disordered" evidence="2">
    <location>
        <begin position="431"/>
        <end position="675"/>
    </location>
</feature>
<feature type="compositionally biased region" description="Basic and acidic residues" evidence="2">
    <location>
        <begin position="307"/>
        <end position="320"/>
    </location>
</feature>
<feature type="compositionally biased region" description="Basic and acidic residues" evidence="2">
    <location>
        <begin position="366"/>
        <end position="378"/>
    </location>
</feature>
<feature type="compositionally biased region" description="Basic residues" evidence="2">
    <location>
        <begin position="379"/>
        <end position="392"/>
    </location>
</feature>
<feature type="compositionally biased region" description="Polar residues" evidence="2">
    <location>
        <begin position="403"/>
        <end position="416"/>
    </location>
</feature>
<feature type="compositionally biased region" description="Basic and acidic residues" evidence="2">
    <location>
        <begin position="495"/>
        <end position="505"/>
    </location>
</feature>
<feature type="compositionally biased region" description="Basic and acidic residues" evidence="2">
    <location>
        <begin position="557"/>
        <end position="567"/>
    </location>
</feature>
<feature type="compositionally biased region" description="Basic and acidic residues" evidence="2">
    <location>
        <begin position="636"/>
        <end position="646"/>
    </location>
</feature>
<protein>
    <recommendedName>
        <fullName evidence="3">Testis-expressed protein 13D</fullName>
    </recommendedName>
</protein>
<accession>A0A0J9YY54</accession>
<gene>
    <name evidence="4" type="primary">TEX13D</name>
</gene>
<name>TX13D_HUMAN</name>